<comment type="similarity">
    <text evidence="1">Belongs to the costars family.</text>
</comment>
<comment type="sequence caution" evidence="1">
    <conflict type="erroneous initiation">
        <sequence resource="EMBL-CDS" id="AAF28958"/>
    </conflict>
    <text>Extended N-terminus.</text>
</comment>
<feature type="chain" id="PRO_0000089521" description="Costars family protein ABRACL">
    <location>
        <begin position="1"/>
        <end position="81"/>
    </location>
</feature>
<feature type="modified residue" description="N-acetylmethionine" evidence="2 3">
    <location>
        <position position="1"/>
    </location>
</feature>
<feature type="helix" evidence="4">
    <location>
        <begin position="3"/>
        <end position="17"/>
    </location>
</feature>
<feature type="strand" evidence="4">
    <location>
        <begin position="24"/>
        <end position="29"/>
    </location>
</feature>
<feature type="helix" evidence="4">
    <location>
        <begin position="30"/>
        <end position="40"/>
    </location>
</feature>
<feature type="helix" evidence="4">
    <location>
        <begin position="46"/>
        <end position="55"/>
    </location>
</feature>
<feature type="strand" evidence="4">
    <location>
        <begin position="58"/>
        <end position="60"/>
    </location>
</feature>
<feature type="helix" evidence="4">
    <location>
        <begin position="69"/>
        <end position="71"/>
    </location>
</feature>
<feature type="strand" evidence="4">
    <location>
        <begin position="75"/>
        <end position="78"/>
    </location>
</feature>
<evidence type="ECO:0000305" key="1"/>
<evidence type="ECO:0007744" key="2">
    <source>
    </source>
</evidence>
<evidence type="ECO:0007744" key="3">
    <source>
    </source>
</evidence>
<evidence type="ECO:0007829" key="4">
    <source>
        <dbReference type="PDB" id="2L2O"/>
    </source>
</evidence>
<accession>Q9P1F3</accession>
<accession>Q5SZC8</accession>
<accession>Q9P0A1</accession>
<dbReference type="EMBL" id="AF116682">
    <property type="protein sequence ID" value="AAF71102.1"/>
    <property type="molecule type" value="mRNA"/>
</dbReference>
<dbReference type="EMBL" id="AF161398">
    <property type="protein sequence ID" value="AAF28958.1"/>
    <property type="status" value="ALT_INIT"/>
    <property type="molecule type" value="mRNA"/>
</dbReference>
<dbReference type="EMBL" id="AL590308">
    <property type="status" value="NOT_ANNOTATED_CDS"/>
    <property type="molecule type" value="Genomic_DNA"/>
</dbReference>
<dbReference type="EMBL" id="CH471051">
    <property type="protein sequence ID" value="EAW47902.1"/>
    <property type="molecule type" value="Genomic_DNA"/>
</dbReference>
<dbReference type="EMBL" id="BC014953">
    <property type="protein sequence ID" value="AAH14953.1"/>
    <property type="molecule type" value="mRNA"/>
</dbReference>
<dbReference type="CCDS" id="CCDS43509.1"/>
<dbReference type="RefSeq" id="NP_067066.1">
    <property type="nucleotide sequence ID" value="NM_021243.3"/>
</dbReference>
<dbReference type="RefSeq" id="XP_016866640.1">
    <property type="nucleotide sequence ID" value="XM_017011151.2"/>
</dbReference>
<dbReference type="RefSeq" id="XP_054212103.1">
    <property type="nucleotide sequence ID" value="XM_054356128.1"/>
</dbReference>
<dbReference type="RefSeq" id="XP_054212104.1">
    <property type="nucleotide sequence ID" value="XM_054356129.1"/>
</dbReference>
<dbReference type="RefSeq" id="XP_054212105.1">
    <property type="nucleotide sequence ID" value="XM_054356130.1"/>
</dbReference>
<dbReference type="PDB" id="2L2O">
    <property type="method" value="NMR"/>
    <property type="chains" value="A=1-81"/>
</dbReference>
<dbReference type="PDBsum" id="2L2O"/>
<dbReference type="BMRB" id="Q9P1F3"/>
<dbReference type="SMR" id="Q9P1F3"/>
<dbReference type="BioGRID" id="121847">
    <property type="interactions" value="9"/>
</dbReference>
<dbReference type="FunCoup" id="Q9P1F3">
    <property type="interactions" value="131"/>
</dbReference>
<dbReference type="IntAct" id="Q9P1F3">
    <property type="interactions" value="4"/>
</dbReference>
<dbReference type="STRING" id="9606.ENSP00000356632"/>
<dbReference type="iPTMnet" id="Q9P1F3"/>
<dbReference type="PhosphoSitePlus" id="Q9P1F3"/>
<dbReference type="BioMuta" id="ABRACL"/>
<dbReference type="jPOST" id="Q9P1F3"/>
<dbReference type="MassIVE" id="Q9P1F3"/>
<dbReference type="PaxDb" id="9606-ENSP00000356632"/>
<dbReference type="PeptideAtlas" id="Q9P1F3"/>
<dbReference type="ProteomicsDB" id="83647"/>
<dbReference type="Pumba" id="Q9P1F3"/>
<dbReference type="TopDownProteomics" id="Q9P1F3"/>
<dbReference type="Antibodypedia" id="33082">
    <property type="antibodies" value="66 antibodies from 13 providers"/>
</dbReference>
<dbReference type="DNASU" id="58527"/>
<dbReference type="Ensembl" id="ENST00000367660.4">
    <property type="protein sequence ID" value="ENSP00000356632.3"/>
    <property type="gene ID" value="ENSG00000146386.8"/>
</dbReference>
<dbReference type="GeneID" id="58527"/>
<dbReference type="KEGG" id="hsa:58527"/>
<dbReference type="MANE-Select" id="ENST00000367660.4">
    <property type="protein sequence ID" value="ENSP00000356632.3"/>
    <property type="RefSeq nucleotide sequence ID" value="NM_021243.3"/>
    <property type="RefSeq protein sequence ID" value="NP_067066.1"/>
</dbReference>
<dbReference type="UCSC" id="uc003qil.2">
    <property type="organism name" value="human"/>
</dbReference>
<dbReference type="AGR" id="HGNC:21230"/>
<dbReference type="CTD" id="58527"/>
<dbReference type="DisGeNET" id="58527"/>
<dbReference type="GeneCards" id="ABRACL"/>
<dbReference type="HGNC" id="HGNC:21230">
    <property type="gene designation" value="ABRACL"/>
</dbReference>
<dbReference type="HPA" id="ENSG00000146386">
    <property type="expression patterns" value="Low tissue specificity"/>
</dbReference>
<dbReference type="neXtProt" id="NX_Q9P1F3"/>
<dbReference type="OpenTargets" id="ENSG00000146386"/>
<dbReference type="PharmGKB" id="PA134884626"/>
<dbReference type="VEuPathDB" id="HostDB:ENSG00000146386"/>
<dbReference type="eggNOG" id="KOG3376">
    <property type="taxonomic scope" value="Eukaryota"/>
</dbReference>
<dbReference type="GeneTree" id="ENSGT00470000042287"/>
<dbReference type="HOGENOM" id="CLU_173478_0_0_1"/>
<dbReference type="InParanoid" id="Q9P1F3"/>
<dbReference type="OMA" id="QRVHDNV"/>
<dbReference type="OrthoDB" id="9871914at2759"/>
<dbReference type="PAN-GO" id="Q9P1F3">
    <property type="GO annotations" value="1 GO annotation based on evolutionary models"/>
</dbReference>
<dbReference type="PhylomeDB" id="Q9P1F3"/>
<dbReference type="PathwayCommons" id="Q9P1F3"/>
<dbReference type="SignaLink" id="Q9P1F3"/>
<dbReference type="BioGRID-ORCS" id="58527">
    <property type="hits" value="8 hits in 1161 CRISPR screens"/>
</dbReference>
<dbReference type="CD-CODE" id="DEE660B4">
    <property type="entry name" value="Stress granule"/>
</dbReference>
<dbReference type="ChiTaRS" id="ABRACL">
    <property type="organism name" value="human"/>
</dbReference>
<dbReference type="EvolutionaryTrace" id="Q9P1F3"/>
<dbReference type="GenomeRNAi" id="58527"/>
<dbReference type="Pharos" id="Q9P1F3">
    <property type="development level" value="Tbio"/>
</dbReference>
<dbReference type="PRO" id="PR:Q9P1F3"/>
<dbReference type="Proteomes" id="UP000005640">
    <property type="component" value="Chromosome 6"/>
</dbReference>
<dbReference type="RNAct" id="Q9P1F3">
    <property type="molecule type" value="protein"/>
</dbReference>
<dbReference type="Bgee" id="ENSG00000146386">
    <property type="expression patterns" value="Expressed in monocyte and 173 other cell types or tissues"/>
</dbReference>
<dbReference type="ExpressionAtlas" id="Q9P1F3">
    <property type="expression patterns" value="baseline and differential"/>
</dbReference>
<dbReference type="GO" id="GO:0032970">
    <property type="term" value="P:regulation of actin filament-based process"/>
    <property type="evidence" value="ECO:0000318"/>
    <property type="project" value="GO_Central"/>
</dbReference>
<dbReference type="FunFam" id="1.10.10.1540:FF:000002">
    <property type="entry name" value="costars family protein ABRACL"/>
    <property type="match status" value="1"/>
</dbReference>
<dbReference type="Gene3D" id="1.10.10.1540">
    <property type="entry name" value="Costar domain"/>
    <property type="match status" value="1"/>
</dbReference>
<dbReference type="InterPro" id="IPR044302">
    <property type="entry name" value="Costars"/>
</dbReference>
<dbReference type="InterPro" id="IPR027817">
    <property type="entry name" value="Costars_dom"/>
</dbReference>
<dbReference type="InterPro" id="IPR038095">
    <property type="entry name" value="Costars_sf"/>
</dbReference>
<dbReference type="PANTHER" id="PTHR46334">
    <property type="entry name" value="COSTARS FAMILY PROTEIN ABRACL"/>
    <property type="match status" value="1"/>
</dbReference>
<dbReference type="PANTHER" id="PTHR46334:SF1">
    <property type="entry name" value="COSTARS FAMILY PROTEIN ABRACL"/>
    <property type="match status" value="1"/>
</dbReference>
<dbReference type="Pfam" id="PF14705">
    <property type="entry name" value="Costars"/>
    <property type="match status" value="1"/>
</dbReference>
<dbReference type="SMART" id="SM01283">
    <property type="entry name" value="Costars"/>
    <property type="match status" value="1"/>
</dbReference>
<proteinExistence type="evidence at protein level"/>
<name>ABRAL_HUMAN</name>
<reference key="1">
    <citation type="submission" date="1998-12" db="EMBL/GenBank/DDBJ databases">
        <title>Functional prediction of the coding sequences of 121 new genes deduced by analysis of cDNA clones from human fetal liver.</title>
        <authorList>
            <person name="Zhang C."/>
            <person name="Yu Y."/>
            <person name="Zhang S."/>
            <person name="Wei H."/>
            <person name="Zhou G."/>
            <person name="Ouyang S."/>
            <person name="Luo L."/>
            <person name="Bi J."/>
            <person name="Liu M."/>
            <person name="He F."/>
        </authorList>
    </citation>
    <scope>NUCLEOTIDE SEQUENCE [LARGE SCALE MRNA]</scope>
    <source>
        <tissue>Fetal liver</tissue>
    </source>
</reference>
<reference key="2">
    <citation type="journal article" date="2000" name="Genome Res.">
        <title>Cloning and functional analysis of cDNAs with open reading frames for 300 previously undefined genes expressed in CD34+ hematopoietic stem/progenitor cells.</title>
        <authorList>
            <person name="Zhang Q.-H."/>
            <person name="Ye M."/>
            <person name="Wu X.-Y."/>
            <person name="Ren S.-X."/>
            <person name="Zhao M."/>
            <person name="Zhao C.-J."/>
            <person name="Fu G."/>
            <person name="Shen Y."/>
            <person name="Fan H.-Y."/>
            <person name="Lu G."/>
            <person name="Zhong M."/>
            <person name="Xu X.-R."/>
            <person name="Han Z.-G."/>
            <person name="Zhang J.-W."/>
            <person name="Tao J."/>
            <person name="Huang Q.-H."/>
            <person name="Zhou J."/>
            <person name="Hu G.-X."/>
            <person name="Gu J."/>
            <person name="Chen S.-J."/>
            <person name="Chen Z."/>
        </authorList>
    </citation>
    <scope>NUCLEOTIDE SEQUENCE [LARGE SCALE MRNA]</scope>
    <source>
        <tissue>Umbilical cord blood</tissue>
    </source>
</reference>
<reference key="3">
    <citation type="journal article" date="2003" name="Nature">
        <title>The DNA sequence and analysis of human chromosome 6.</title>
        <authorList>
            <person name="Mungall A.J."/>
            <person name="Palmer S.A."/>
            <person name="Sims S.K."/>
            <person name="Edwards C.A."/>
            <person name="Ashurst J.L."/>
            <person name="Wilming L."/>
            <person name="Jones M.C."/>
            <person name="Horton R."/>
            <person name="Hunt S.E."/>
            <person name="Scott C.E."/>
            <person name="Gilbert J.G.R."/>
            <person name="Clamp M.E."/>
            <person name="Bethel G."/>
            <person name="Milne S."/>
            <person name="Ainscough R."/>
            <person name="Almeida J.P."/>
            <person name="Ambrose K.D."/>
            <person name="Andrews T.D."/>
            <person name="Ashwell R.I.S."/>
            <person name="Babbage A.K."/>
            <person name="Bagguley C.L."/>
            <person name="Bailey J."/>
            <person name="Banerjee R."/>
            <person name="Barker D.J."/>
            <person name="Barlow K.F."/>
            <person name="Bates K."/>
            <person name="Beare D.M."/>
            <person name="Beasley H."/>
            <person name="Beasley O."/>
            <person name="Bird C.P."/>
            <person name="Blakey S.E."/>
            <person name="Bray-Allen S."/>
            <person name="Brook J."/>
            <person name="Brown A.J."/>
            <person name="Brown J.Y."/>
            <person name="Burford D.C."/>
            <person name="Burrill W."/>
            <person name="Burton J."/>
            <person name="Carder C."/>
            <person name="Carter N.P."/>
            <person name="Chapman J.C."/>
            <person name="Clark S.Y."/>
            <person name="Clark G."/>
            <person name="Clee C.M."/>
            <person name="Clegg S."/>
            <person name="Cobley V."/>
            <person name="Collier R.E."/>
            <person name="Collins J.E."/>
            <person name="Colman L.K."/>
            <person name="Corby N.R."/>
            <person name="Coville G.J."/>
            <person name="Culley K.M."/>
            <person name="Dhami P."/>
            <person name="Davies J."/>
            <person name="Dunn M."/>
            <person name="Earthrowl M.E."/>
            <person name="Ellington A.E."/>
            <person name="Evans K.A."/>
            <person name="Faulkner L."/>
            <person name="Francis M.D."/>
            <person name="Frankish A."/>
            <person name="Frankland J."/>
            <person name="French L."/>
            <person name="Garner P."/>
            <person name="Garnett J."/>
            <person name="Ghori M.J."/>
            <person name="Gilby L.M."/>
            <person name="Gillson C.J."/>
            <person name="Glithero R.J."/>
            <person name="Grafham D.V."/>
            <person name="Grant M."/>
            <person name="Gribble S."/>
            <person name="Griffiths C."/>
            <person name="Griffiths M.N.D."/>
            <person name="Hall R."/>
            <person name="Halls K.S."/>
            <person name="Hammond S."/>
            <person name="Harley J.L."/>
            <person name="Hart E.A."/>
            <person name="Heath P.D."/>
            <person name="Heathcott R."/>
            <person name="Holmes S.J."/>
            <person name="Howden P.J."/>
            <person name="Howe K.L."/>
            <person name="Howell G.R."/>
            <person name="Huckle E."/>
            <person name="Humphray S.J."/>
            <person name="Humphries M.D."/>
            <person name="Hunt A.R."/>
            <person name="Johnson C.M."/>
            <person name="Joy A.A."/>
            <person name="Kay M."/>
            <person name="Keenan S.J."/>
            <person name="Kimberley A.M."/>
            <person name="King A."/>
            <person name="Laird G.K."/>
            <person name="Langford C."/>
            <person name="Lawlor S."/>
            <person name="Leongamornlert D.A."/>
            <person name="Leversha M."/>
            <person name="Lloyd C.R."/>
            <person name="Lloyd D.M."/>
            <person name="Loveland J.E."/>
            <person name="Lovell J."/>
            <person name="Martin S."/>
            <person name="Mashreghi-Mohammadi M."/>
            <person name="Maslen G.L."/>
            <person name="Matthews L."/>
            <person name="McCann O.T."/>
            <person name="McLaren S.J."/>
            <person name="McLay K."/>
            <person name="McMurray A."/>
            <person name="Moore M.J.F."/>
            <person name="Mullikin J.C."/>
            <person name="Niblett D."/>
            <person name="Nickerson T."/>
            <person name="Novik K.L."/>
            <person name="Oliver K."/>
            <person name="Overton-Larty E.K."/>
            <person name="Parker A."/>
            <person name="Patel R."/>
            <person name="Pearce A.V."/>
            <person name="Peck A.I."/>
            <person name="Phillimore B.J.C.T."/>
            <person name="Phillips S."/>
            <person name="Plumb R.W."/>
            <person name="Porter K.M."/>
            <person name="Ramsey Y."/>
            <person name="Ranby S.A."/>
            <person name="Rice C.M."/>
            <person name="Ross M.T."/>
            <person name="Searle S.M."/>
            <person name="Sehra H.K."/>
            <person name="Sheridan E."/>
            <person name="Skuce C.D."/>
            <person name="Smith S."/>
            <person name="Smith M."/>
            <person name="Spraggon L."/>
            <person name="Squares S.L."/>
            <person name="Steward C.A."/>
            <person name="Sycamore N."/>
            <person name="Tamlyn-Hall G."/>
            <person name="Tester J."/>
            <person name="Theaker A.J."/>
            <person name="Thomas D.W."/>
            <person name="Thorpe A."/>
            <person name="Tracey A."/>
            <person name="Tromans A."/>
            <person name="Tubby B."/>
            <person name="Wall M."/>
            <person name="Wallis J.M."/>
            <person name="West A.P."/>
            <person name="White S.S."/>
            <person name="Whitehead S.L."/>
            <person name="Whittaker H."/>
            <person name="Wild A."/>
            <person name="Willey D.J."/>
            <person name="Wilmer T.E."/>
            <person name="Wood J.M."/>
            <person name="Wray P.W."/>
            <person name="Wyatt J.C."/>
            <person name="Young L."/>
            <person name="Younger R.M."/>
            <person name="Bentley D.R."/>
            <person name="Coulson A."/>
            <person name="Durbin R.M."/>
            <person name="Hubbard T."/>
            <person name="Sulston J.E."/>
            <person name="Dunham I."/>
            <person name="Rogers J."/>
            <person name="Beck S."/>
        </authorList>
    </citation>
    <scope>NUCLEOTIDE SEQUENCE [LARGE SCALE GENOMIC DNA]</scope>
</reference>
<reference key="4">
    <citation type="submission" date="2005-09" db="EMBL/GenBank/DDBJ databases">
        <authorList>
            <person name="Mural R.J."/>
            <person name="Istrail S."/>
            <person name="Sutton G.G."/>
            <person name="Florea L."/>
            <person name="Halpern A.L."/>
            <person name="Mobarry C.M."/>
            <person name="Lippert R."/>
            <person name="Walenz B."/>
            <person name="Shatkay H."/>
            <person name="Dew I."/>
            <person name="Miller J.R."/>
            <person name="Flanigan M.J."/>
            <person name="Edwards N.J."/>
            <person name="Bolanos R."/>
            <person name="Fasulo D."/>
            <person name="Halldorsson B.V."/>
            <person name="Hannenhalli S."/>
            <person name="Turner R."/>
            <person name="Yooseph S."/>
            <person name="Lu F."/>
            <person name="Nusskern D.R."/>
            <person name="Shue B.C."/>
            <person name="Zheng X.H."/>
            <person name="Zhong F."/>
            <person name="Delcher A.L."/>
            <person name="Huson D.H."/>
            <person name="Kravitz S.A."/>
            <person name="Mouchard L."/>
            <person name="Reinert K."/>
            <person name="Remington K.A."/>
            <person name="Clark A.G."/>
            <person name="Waterman M.S."/>
            <person name="Eichler E.E."/>
            <person name="Adams M.D."/>
            <person name="Hunkapiller M.W."/>
            <person name="Myers E.W."/>
            <person name="Venter J.C."/>
        </authorList>
    </citation>
    <scope>NUCLEOTIDE SEQUENCE [LARGE SCALE GENOMIC DNA]</scope>
</reference>
<reference key="5">
    <citation type="journal article" date="2004" name="Genome Res.">
        <title>The status, quality, and expansion of the NIH full-length cDNA project: the Mammalian Gene Collection (MGC).</title>
        <authorList>
            <consortium name="The MGC Project Team"/>
        </authorList>
    </citation>
    <scope>NUCLEOTIDE SEQUENCE [LARGE SCALE MRNA]</scope>
    <source>
        <tissue>Blood</tissue>
    </source>
</reference>
<reference key="6">
    <citation type="journal article" date="2003" name="Nat. Biotechnol.">
        <title>Exploring proteomes and analyzing protein processing by mass spectrometric identification of sorted N-terminal peptides.</title>
        <authorList>
            <person name="Gevaert K."/>
            <person name="Goethals M."/>
            <person name="Martens L."/>
            <person name="Van Damme J."/>
            <person name="Staes A."/>
            <person name="Thomas G.R."/>
            <person name="Vandekerckhove J."/>
        </authorList>
    </citation>
    <scope>PROTEIN SEQUENCE OF 1-16</scope>
    <source>
        <tissue>Platelet</tissue>
    </source>
</reference>
<reference key="7">
    <citation type="journal article" date="2009" name="Anal. Chem.">
        <title>Lys-N and trypsin cover complementary parts of the phosphoproteome in a refined SCX-based approach.</title>
        <authorList>
            <person name="Gauci S."/>
            <person name="Helbig A.O."/>
            <person name="Slijper M."/>
            <person name="Krijgsveld J."/>
            <person name="Heck A.J."/>
            <person name="Mohammed S."/>
        </authorList>
    </citation>
    <scope>ACETYLATION [LARGE SCALE ANALYSIS] AT MET-1</scope>
    <scope>IDENTIFICATION BY MASS SPECTROMETRY [LARGE SCALE ANALYSIS]</scope>
</reference>
<reference key="8">
    <citation type="journal article" date="2015" name="Proteomics">
        <title>N-terminome analysis of the human mitochondrial proteome.</title>
        <authorList>
            <person name="Vaca Jacome A.S."/>
            <person name="Rabilloud T."/>
            <person name="Schaeffer-Reiss C."/>
            <person name="Rompais M."/>
            <person name="Ayoub D."/>
            <person name="Lane L."/>
            <person name="Bairoch A."/>
            <person name="Van Dorsselaer A."/>
            <person name="Carapito C."/>
        </authorList>
    </citation>
    <scope>ACETYLATION [LARGE SCALE ANALYSIS] AT MET-1</scope>
    <scope>IDENTIFICATION BY MASS SPECTROMETRY [LARGE SCALE ANALYSIS]</scope>
</reference>
<reference key="9">
    <citation type="journal article" date="2011" name="Protein Sci.">
        <title>Solution structure of the human HSPC280 protein.</title>
        <authorList>
            <person name="Lin J."/>
            <person name="Zhou T."/>
            <person name="Wang J."/>
        </authorList>
    </citation>
    <scope>STRUCTURE BY NMR OF 1-81</scope>
</reference>
<keyword id="KW-0002">3D-structure</keyword>
<keyword id="KW-0007">Acetylation</keyword>
<keyword id="KW-0903">Direct protein sequencing</keyword>
<keyword id="KW-1267">Proteomics identification</keyword>
<keyword id="KW-1185">Reference proteome</keyword>
<sequence>MNVDHEVNLLVEEIHRLGSKNADGKLSVKFGVLFRDDKCANLFEALVGTLKAAKRRKIVTYPGELLLQGVHDDVDIILLQD</sequence>
<organism>
    <name type="scientific">Homo sapiens</name>
    <name type="common">Human</name>
    <dbReference type="NCBI Taxonomy" id="9606"/>
    <lineage>
        <taxon>Eukaryota</taxon>
        <taxon>Metazoa</taxon>
        <taxon>Chordata</taxon>
        <taxon>Craniata</taxon>
        <taxon>Vertebrata</taxon>
        <taxon>Euteleostomi</taxon>
        <taxon>Mammalia</taxon>
        <taxon>Eutheria</taxon>
        <taxon>Euarchontoglires</taxon>
        <taxon>Primates</taxon>
        <taxon>Haplorrhini</taxon>
        <taxon>Catarrhini</taxon>
        <taxon>Hominidae</taxon>
        <taxon>Homo</taxon>
    </lineage>
</organism>
<gene>
    <name type="primary">ABRACL</name>
    <name type="synonym">C6orf115</name>
    <name type="ORF">HSPC280</name>
    <name type="ORF">PRO2013</name>
</gene>
<protein>
    <recommendedName>
        <fullName>Costars family protein ABRACL</fullName>
    </recommendedName>
    <alternativeName>
        <fullName>ABRA C-terminal-like protein</fullName>
    </alternativeName>
</protein>